<keyword id="KW-0489">Methyltransferase</keyword>
<keyword id="KW-1185">Reference proteome</keyword>
<keyword id="KW-0949">S-adenosyl-L-methionine</keyword>
<keyword id="KW-0808">Transferase</keyword>
<comment type="function">
    <text evidence="1">Methylates the class 1 translation termination release factors RF1/PrfA and RF2/PrfB on the glutamine residue of the universally conserved GGQ motif.</text>
</comment>
<comment type="catalytic activity">
    <reaction evidence="1">
        <text>L-glutaminyl-[peptide chain release factor] + S-adenosyl-L-methionine = N(5)-methyl-L-glutaminyl-[peptide chain release factor] + S-adenosyl-L-homocysteine + H(+)</text>
        <dbReference type="Rhea" id="RHEA:42896"/>
        <dbReference type="Rhea" id="RHEA-COMP:10271"/>
        <dbReference type="Rhea" id="RHEA-COMP:10272"/>
        <dbReference type="ChEBI" id="CHEBI:15378"/>
        <dbReference type="ChEBI" id="CHEBI:30011"/>
        <dbReference type="ChEBI" id="CHEBI:57856"/>
        <dbReference type="ChEBI" id="CHEBI:59789"/>
        <dbReference type="ChEBI" id="CHEBI:61891"/>
        <dbReference type="EC" id="2.1.1.297"/>
    </reaction>
</comment>
<comment type="similarity">
    <text evidence="1">Belongs to the protein N5-glutamine methyltransferase family. PrmC subfamily.</text>
</comment>
<evidence type="ECO:0000255" key="1">
    <source>
        <dbReference type="HAMAP-Rule" id="MF_02126"/>
    </source>
</evidence>
<protein>
    <recommendedName>
        <fullName evidence="1">Release factor glutamine methyltransferase</fullName>
        <shortName evidence="1">RF MTase</shortName>
        <ecNumber evidence="1">2.1.1.297</ecNumber>
    </recommendedName>
    <alternativeName>
        <fullName evidence="1">N5-glutamine methyltransferase PrmC</fullName>
    </alternativeName>
    <alternativeName>
        <fullName evidence="1">Protein-(glutamine-N5) MTase PrmC</fullName>
    </alternativeName>
    <alternativeName>
        <fullName evidence="1">Protein-glutamine N-methyltransferase PrmC</fullName>
    </alternativeName>
</protein>
<reference key="1">
    <citation type="journal article" date="2003" name="Science">
        <title>Role of mobile DNA in the evolution of vancomycin-resistant Enterococcus faecalis.</title>
        <authorList>
            <person name="Paulsen I.T."/>
            <person name="Banerjei L."/>
            <person name="Myers G.S.A."/>
            <person name="Nelson K.E."/>
            <person name="Seshadri R."/>
            <person name="Read T.D."/>
            <person name="Fouts D.E."/>
            <person name="Eisen J.A."/>
            <person name="Gill S.R."/>
            <person name="Heidelberg J.F."/>
            <person name="Tettelin H."/>
            <person name="Dodson R.J."/>
            <person name="Umayam L.A."/>
            <person name="Brinkac L.M."/>
            <person name="Beanan M.J."/>
            <person name="Daugherty S.C."/>
            <person name="DeBoy R.T."/>
            <person name="Durkin S.A."/>
            <person name="Kolonay J.F."/>
            <person name="Madupu R."/>
            <person name="Nelson W.C."/>
            <person name="Vamathevan J.J."/>
            <person name="Tran B."/>
            <person name="Upton J."/>
            <person name="Hansen T."/>
            <person name="Shetty J."/>
            <person name="Khouri H.M."/>
            <person name="Utterback T.R."/>
            <person name="Radune D."/>
            <person name="Ketchum K.A."/>
            <person name="Dougherty B.A."/>
            <person name="Fraser C.M."/>
        </authorList>
    </citation>
    <scope>NUCLEOTIDE SEQUENCE [LARGE SCALE GENOMIC DNA]</scope>
    <source>
        <strain>ATCC 700802 / V583</strain>
    </source>
</reference>
<sequence length="277" mass="31239">MAKRYFEVLNWASSFLEAQGKEGYAIHYVFLERKGWDKTQWLLHMQEEMPQEEEEQLKTDLAQLLTDYPAQYLLGQAEFYGHSFIVNEHTLIPRPETEELVERCLKANPDTPLTVVDVGTGTGAIAVSLKLARPNWRVIAIDLSEEALTVAKQNAQALGAGIEFYHGNGLQPVASEKIDLLISNPPYISEQEWYLMDASVRTYEPKTALFAENNGLALYQQLIHESQTMLKADGKIYFEIGFQQGAALQELLSAAYPQKTIKIEKDLSGNDRLAIAE</sequence>
<name>PRMC_ENTFA</name>
<gene>
    <name evidence="1" type="primary">prmC</name>
    <name type="synonym">hemK</name>
    <name type="ordered locus">EF_2553</name>
</gene>
<feature type="chain" id="PRO_0000414520" description="Release factor glutamine methyltransferase">
    <location>
        <begin position="1"/>
        <end position="277"/>
    </location>
</feature>
<feature type="binding site" evidence="1">
    <location>
        <begin position="119"/>
        <end position="123"/>
    </location>
    <ligand>
        <name>S-adenosyl-L-methionine</name>
        <dbReference type="ChEBI" id="CHEBI:59789"/>
    </ligand>
</feature>
<feature type="binding site" evidence="1">
    <location>
        <position position="142"/>
    </location>
    <ligand>
        <name>S-adenosyl-L-methionine</name>
        <dbReference type="ChEBI" id="CHEBI:59789"/>
    </ligand>
</feature>
<feature type="binding site" evidence="1">
    <location>
        <begin position="184"/>
        <end position="187"/>
    </location>
    <ligand>
        <name>substrate</name>
    </ligand>
</feature>
<feature type="binding site" evidence="1">
    <location>
        <position position="184"/>
    </location>
    <ligand>
        <name>S-adenosyl-L-methionine</name>
        <dbReference type="ChEBI" id="CHEBI:59789"/>
    </ligand>
</feature>
<accession>Q831F7</accession>
<organism>
    <name type="scientific">Enterococcus faecalis (strain ATCC 700802 / V583)</name>
    <dbReference type="NCBI Taxonomy" id="226185"/>
    <lineage>
        <taxon>Bacteria</taxon>
        <taxon>Bacillati</taxon>
        <taxon>Bacillota</taxon>
        <taxon>Bacilli</taxon>
        <taxon>Lactobacillales</taxon>
        <taxon>Enterococcaceae</taxon>
        <taxon>Enterococcus</taxon>
    </lineage>
</organism>
<proteinExistence type="inferred from homology"/>
<dbReference type="EC" id="2.1.1.297" evidence="1"/>
<dbReference type="EMBL" id="AE016830">
    <property type="protein sequence ID" value="AAO82265.1"/>
    <property type="molecule type" value="Genomic_DNA"/>
</dbReference>
<dbReference type="RefSeq" id="NP_816195.1">
    <property type="nucleotide sequence ID" value="NC_004668.1"/>
</dbReference>
<dbReference type="RefSeq" id="WP_002379699.1">
    <property type="nucleotide sequence ID" value="NZ_KE136528.1"/>
</dbReference>
<dbReference type="SMR" id="Q831F7"/>
<dbReference type="STRING" id="226185.EF_2553"/>
<dbReference type="EnsemblBacteria" id="AAO82265">
    <property type="protein sequence ID" value="AAO82265"/>
    <property type="gene ID" value="EF_2553"/>
</dbReference>
<dbReference type="KEGG" id="efa:EF2553"/>
<dbReference type="PATRIC" id="fig|226185.45.peg.998"/>
<dbReference type="eggNOG" id="COG2890">
    <property type="taxonomic scope" value="Bacteria"/>
</dbReference>
<dbReference type="HOGENOM" id="CLU_018398_3_2_9"/>
<dbReference type="Proteomes" id="UP000001415">
    <property type="component" value="Chromosome"/>
</dbReference>
<dbReference type="GO" id="GO:0003676">
    <property type="term" value="F:nucleic acid binding"/>
    <property type="evidence" value="ECO:0007669"/>
    <property type="project" value="InterPro"/>
</dbReference>
<dbReference type="GO" id="GO:0102559">
    <property type="term" value="F:protein-(glutamine-N5) methyltransferase activity"/>
    <property type="evidence" value="ECO:0007669"/>
    <property type="project" value="UniProtKB-EC"/>
</dbReference>
<dbReference type="GO" id="GO:0036009">
    <property type="term" value="F:protein-glutamine N-methyltransferase activity"/>
    <property type="evidence" value="ECO:0007669"/>
    <property type="project" value="UniProtKB-UniRule"/>
</dbReference>
<dbReference type="GO" id="GO:0032259">
    <property type="term" value="P:methylation"/>
    <property type="evidence" value="ECO:0007669"/>
    <property type="project" value="UniProtKB-KW"/>
</dbReference>
<dbReference type="CDD" id="cd02440">
    <property type="entry name" value="AdoMet_MTases"/>
    <property type="match status" value="1"/>
</dbReference>
<dbReference type="Gene3D" id="1.10.8.10">
    <property type="entry name" value="DNA helicase RuvA subunit, C-terminal domain"/>
    <property type="match status" value="1"/>
</dbReference>
<dbReference type="Gene3D" id="3.40.50.150">
    <property type="entry name" value="Vaccinia Virus protein VP39"/>
    <property type="match status" value="1"/>
</dbReference>
<dbReference type="HAMAP" id="MF_02126">
    <property type="entry name" value="RF_methyltr_PrmC"/>
    <property type="match status" value="1"/>
</dbReference>
<dbReference type="InterPro" id="IPR002052">
    <property type="entry name" value="DNA_methylase_N6_adenine_CS"/>
</dbReference>
<dbReference type="InterPro" id="IPR004556">
    <property type="entry name" value="HemK-like"/>
</dbReference>
<dbReference type="InterPro" id="IPR050320">
    <property type="entry name" value="N5-glutamine_MTase"/>
</dbReference>
<dbReference type="InterPro" id="IPR040758">
    <property type="entry name" value="PrmC_N"/>
</dbReference>
<dbReference type="InterPro" id="IPR019874">
    <property type="entry name" value="RF_methyltr_PrmC"/>
</dbReference>
<dbReference type="InterPro" id="IPR029063">
    <property type="entry name" value="SAM-dependent_MTases_sf"/>
</dbReference>
<dbReference type="InterPro" id="IPR007848">
    <property type="entry name" value="Small_mtfrase_dom"/>
</dbReference>
<dbReference type="NCBIfam" id="TIGR00536">
    <property type="entry name" value="hemK_fam"/>
    <property type="match status" value="1"/>
</dbReference>
<dbReference type="NCBIfam" id="TIGR03534">
    <property type="entry name" value="RF_mod_PrmC"/>
    <property type="match status" value="1"/>
</dbReference>
<dbReference type="PANTHER" id="PTHR18895">
    <property type="entry name" value="HEMK METHYLTRANSFERASE"/>
    <property type="match status" value="1"/>
</dbReference>
<dbReference type="PANTHER" id="PTHR18895:SF74">
    <property type="entry name" value="MTRF1L RELEASE FACTOR GLUTAMINE METHYLTRANSFERASE"/>
    <property type="match status" value="1"/>
</dbReference>
<dbReference type="Pfam" id="PF05175">
    <property type="entry name" value="MTS"/>
    <property type="match status" value="1"/>
</dbReference>
<dbReference type="Pfam" id="PF17827">
    <property type="entry name" value="PrmC_N"/>
    <property type="match status" value="1"/>
</dbReference>
<dbReference type="SUPFAM" id="SSF53335">
    <property type="entry name" value="S-adenosyl-L-methionine-dependent methyltransferases"/>
    <property type="match status" value="1"/>
</dbReference>